<comment type="function">
    <text evidence="1">Catalyzes an early step in the biosynthesis of tetrapyrroles. Binds two molecules of 5-aminolevulinate per subunit, each at a distinct site, and catalyzes their condensation to form porphobilinogen (By similarity).</text>
</comment>
<comment type="catalytic activity">
    <reaction>
        <text>2 5-aminolevulinate = porphobilinogen + 2 H2O + H(+)</text>
        <dbReference type="Rhea" id="RHEA:24064"/>
        <dbReference type="ChEBI" id="CHEBI:15377"/>
        <dbReference type="ChEBI" id="CHEBI:15378"/>
        <dbReference type="ChEBI" id="CHEBI:58126"/>
        <dbReference type="ChEBI" id="CHEBI:356416"/>
        <dbReference type="EC" id="4.2.1.24"/>
    </reaction>
</comment>
<comment type="cofactor">
    <cofactor evidence="1">
        <name>Zn(2+)</name>
        <dbReference type="ChEBI" id="CHEBI:29105"/>
    </cofactor>
    <text evidence="1">Binds 1 zinc ion per monomer.</text>
</comment>
<comment type="pathway">
    <text>Porphyrin-containing compound metabolism; protoporphyrin-IX biosynthesis; coproporphyrinogen-III from 5-aminolevulinate: step 1/4.</text>
</comment>
<comment type="subunit">
    <text evidence="1">Homooctamer.</text>
</comment>
<comment type="similarity">
    <text evidence="2">Belongs to the ALAD family.</text>
</comment>
<sequence length="323" mass="36454">MKFDRHRRLRSSATMRDMVRENHVRKEDLIYPIFVVEKDDVKKEIKSLPGVYQISLNLLESELKEAYDLGIRAIMFFGVPNSKDDIGTGAYIHDGVIQQATRIAKKMYDDLLIVADTCLCEYTDHGHCGVIDDHTHDVDNDKSLPLLVKTAISQVEAGADIIAPSNMMDGFVAEIRRGLDEAGYYNIPIMSYGVKYASSFFGPFRDAADSAPSFGDRKTYQMDPANRLEALRELESDLKEGCDMMIVKPALSYLDIVRDVKNHTNVPVVAYNVSGEYSMTKAAAQNGWIDEERVVMEQMVSMKRAGADMIITYCKDICRYLDN</sequence>
<organism>
    <name type="scientific">Staphylococcus aureus</name>
    <dbReference type="NCBI Taxonomy" id="1280"/>
    <lineage>
        <taxon>Bacteria</taxon>
        <taxon>Bacillati</taxon>
        <taxon>Bacillota</taxon>
        <taxon>Bacilli</taxon>
        <taxon>Bacillales</taxon>
        <taxon>Staphylococcaceae</taxon>
        <taxon>Staphylococcus</taxon>
    </lineage>
</organism>
<proteinExistence type="inferred from homology"/>
<protein>
    <recommendedName>
        <fullName>Delta-aminolevulinic acid dehydratase</fullName>
        <shortName>ALAD</shortName>
        <shortName>ALADH</shortName>
        <ecNumber>4.2.1.24</ecNumber>
    </recommendedName>
    <alternativeName>
        <fullName>Porphobilinogen synthase</fullName>
    </alternativeName>
</protein>
<accession>P0C1R9</accession>
<accession>P50915</accession>
<reference key="1">
    <citation type="journal article" date="1994" name="Can. J. Microbiol.">
        <title>Cloning and sequence analysis of the hemB gene of Staphylococcus aureus.</title>
        <authorList>
            <person name="Kafala B."/>
            <person name="Sasarman A."/>
        </authorList>
    </citation>
    <scope>NUCLEOTIDE SEQUENCE [GENOMIC DNA]</scope>
    <source>
        <strain>SA1959</strain>
    </source>
</reference>
<gene>
    <name type="primary">hemB</name>
</gene>
<name>HEM2_STAAU</name>
<dbReference type="EC" id="4.2.1.24"/>
<dbReference type="EMBL" id="S72488">
    <property type="protein sequence ID" value="AAB32123.2"/>
    <property type="molecule type" value="Genomic_DNA"/>
</dbReference>
<dbReference type="SMR" id="P0C1R9"/>
<dbReference type="UniPathway" id="UPA00251">
    <property type="reaction ID" value="UER00318"/>
</dbReference>
<dbReference type="GO" id="GO:0005829">
    <property type="term" value="C:cytosol"/>
    <property type="evidence" value="ECO:0007669"/>
    <property type="project" value="TreeGrafter"/>
</dbReference>
<dbReference type="GO" id="GO:0004655">
    <property type="term" value="F:porphobilinogen synthase activity"/>
    <property type="evidence" value="ECO:0007669"/>
    <property type="project" value="UniProtKB-EC"/>
</dbReference>
<dbReference type="GO" id="GO:0008270">
    <property type="term" value="F:zinc ion binding"/>
    <property type="evidence" value="ECO:0007669"/>
    <property type="project" value="TreeGrafter"/>
</dbReference>
<dbReference type="GO" id="GO:0006782">
    <property type="term" value="P:protoporphyrinogen IX biosynthetic process"/>
    <property type="evidence" value="ECO:0007669"/>
    <property type="project" value="UniProtKB-UniPathway"/>
</dbReference>
<dbReference type="CDD" id="cd00384">
    <property type="entry name" value="ALAD_PBGS"/>
    <property type="match status" value="1"/>
</dbReference>
<dbReference type="FunFam" id="3.20.20.70:FF:000019">
    <property type="entry name" value="Delta-aminolevulinic acid dehydratase"/>
    <property type="match status" value="1"/>
</dbReference>
<dbReference type="Gene3D" id="3.20.20.70">
    <property type="entry name" value="Aldolase class I"/>
    <property type="match status" value="1"/>
</dbReference>
<dbReference type="InterPro" id="IPR001731">
    <property type="entry name" value="ALAD"/>
</dbReference>
<dbReference type="InterPro" id="IPR030656">
    <property type="entry name" value="ALAD_AS"/>
</dbReference>
<dbReference type="InterPro" id="IPR013785">
    <property type="entry name" value="Aldolase_TIM"/>
</dbReference>
<dbReference type="NCBIfam" id="NF006762">
    <property type="entry name" value="PRK09283.1"/>
    <property type="match status" value="1"/>
</dbReference>
<dbReference type="PANTHER" id="PTHR11458">
    <property type="entry name" value="DELTA-AMINOLEVULINIC ACID DEHYDRATASE"/>
    <property type="match status" value="1"/>
</dbReference>
<dbReference type="PANTHER" id="PTHR11458:SF0">
    <property type="entry name" value="DELTA-AMINOLEVULINIC ACID DEHYDRATASE"/>
    <property type="match status" value="1"/>
</dbReference>
<dbReference type="Pfam" id="PF00490">
    <property type="entry name" value="ALAD"/>
    <property type="match status" value="1"/>
</dbReference>
<dbReference type="PIRSF" id="PIRSF001415">
    <property type="entry name" value="Porphbilin_synth"/>
    <property type="match status" value="1"/>
</dbReference>
<dbReference type="PRINTS" id="PR00144">
    <property type="entry name" value="DALDHYDRTASE"/>
</dbReference>
<dbReference type="SMART" id="SM01004">
    <property type="entry name" value="ALAD"/>
    <property type="match status" value="1"/>
</dbReference>
<dbReference type="SUPFAM" id="SSF51569">
    <property type="entry name" value="Aldolase"/>
    <property type="match status" value="1"/>
</dbReference>
<dbReference type="PROSITE" id="PS00169">
    <property type="entry name" value="D_ALA_DEHYDRATASE"/>
    <property type="match status" value="1"/>
</dbReference>
<keyword id="KW-0350">Heme biosynthesis</keyword>
<keyword id="KW-0456">Lyase</keyword>
<keyword id="KW-0460">Magnesium</keyword>
<keyword id="KW-0479">Metal-binding</keyword>
<keyword id="KW-0627">Porphyrin biosynthesis</keyword>
<keyword id="KW-0862">Zinc</keyword>
<evidence type="ECO:0000250" key="1"/>
<evidence type="ECO:0000305" key="2"/>
<feature type="chain" id="PRO_0000140516" description="Delta-aminolevulinic acid dehydratase">
    <location>
        <begin position="1"/>
        <end position="323"/>
    </location>
</feature>
<feature type="active site" description="Schiff-base intermediate with substrate" evidence="1">
    <location>
        <position position="195"/>
    </location>
</feature>
<feature type="active site" description="Schiff-base intermediate with substrate" evidence="1">
    <location>
        <position position="248"/>
    </location>
</feature>
<feature type="binding site" evidence="1">
    <location>
        <position position="118"/>
    </location>
    <ligand>
        <name>Zn(2+)</name>
        <dbReference type="ChEBI" id="CHEBI:29105"/>
        <note>catalytic</note>
    </ligand>
</feature>
<feature type="binding site" evidence="1">
    <location>
        <position position="120"/>
    </location>
    <ligand>
        <name>Zn(2+)</name>
        <dbReference type="ChEBI" id="CHEBI:29105"/>
        <note>catalytic</note>
    </ligand>
</feature>
<feature type="binding site" evidence="1">
    <location>
        <position position="128"/>
    </location>
    <ligand>
        <name>Zn(2+)</name>
        <dbReference type="ChEBI" id="CHEBI:29105"/>
        <note>catalytic</note>
    </ligand>
</feature>
<feature type="binding site" evidence="1">
    <location>
        <position position="205"/>
    </location>
    <ligand>
        <name>5-aminolevulinate</name>
        <dbReference type="ChEBI" id="CHEBI:356416"/>
        <label>1</label>
    </ligand>
</feature>
<feature type="binding site" evidence="1">
    <location>
        <position position="217"/>
    </location>
    <ligand>
        <name>5-aminolevulinate</name>
        <dbReference type="ChEBI" id="CHEBI:356416"/>
        <label>1</label>
    </ligand>
</feature>
<feature type="binding site" evidence="1">
    <location>
        <position position="233"/>
    </location>
    <ligand>
        <name>Mg(2+)</name>
        <dbReference type="ChEBI" id="CHEBI:18420"/>
    </ligand>
</feature>
<feature type="binding site" evidence="1">
    <location>
        <position position="274"/>
    </location>
    <ligand>
        <name>5-aminolevulinate</name>
        <dbReference type="ChEBI" id="CHEBI:356416"/>
        <label>2</label>
    </ligand>
</feature>
<feature type="binding site" evidence="1">
    <location>
        <position position="313"/>
    </location>
    <ligand>
        <name>5-aminolevulinate</name>
        <dbReference type="ChEBI" id="CHEBI:356416"/>
        <label>2</label>
    </ligand>
</feature>